<keyword id="KW-0028">Amino-acid biosynthesis</keyword>
<keyword id="KW-0220">Diaminopimelate biosynthesis</keyword>
<keyword id="KW-0457">Lysine biosynthesis</keyword>
<keyword id="KW-0521">NADP</keyword>
<keyword id="KW-0560">Oxidoreductase</keyword>
<comment type="function">
    <text evidence="2">Catalyzes the reversible NADPH-dependent reductive amination of L-2-amino-6-oxopimelate, the acyclic form of L-tetrahydrodipicolinate, to generate the meso compound, D,L-2,6-diaminopimelate. Probably plays a role in lysine biosynthesis. Exhibits a high substrate specificity for meso-2,6-diaminopimelate (m-DAP), since the activity with L,L-2,6-diaminopimelate is less than 5% of the activity observed with m-DAP. Can use NAD(+) only very poorly since the activity observed in the presence of NAD(+) is about 14% of that with NADP(+).</text>
</comment>
<comment type="catalytic activity">
    <reaction evidence="2">
        <text>meso-2,6-diaminopimelate + NADP(+) + H2O = (S)-2-amino-6-oxoheptanedioate + NH4(+) + NADPH + H(+)</text>
        <dbReference type="Rhea" id="RHEA:13561"/>
        <dbReference type="ChEBI" id="CHEBI:15377"/>
        <dbReference type="ChEBI" id="CHEBI:15378"/>
        <dbReference type="ChEBI" id="CHEBI:28938"/>
        <dbReference type="ChEBI" id="CHEBI:57783"/>
        <dbReference type="ChEBI" id="CHEBI:57791"/>
        <dbReference type="ChEBI" id="CHEBI:58349"/>
        <dbReference type="ChEBI" id="CHEBI:58556"/>
        <dbReference type="EC" id="1.4.1.16"/>
    </reaction>
</comment>
<comment type="biophysicochemical properties">
    <kinetics>
        <KM evidence="2">0.69 mM for L-2-amino-6-oxoheptanedioate (at 30 degrees Celsius and pH 10.5)</KM>
        <KM evidence="2">0.24 mM for NADPH (at 30 degrees Celsius and pH 10.5)</KM>
        <KM evidence="2">4.1 mM for ammonia (at 30 degrees Celsius and pH 10.5)</KM>
        <Vmax evidence="2">0.18 umol/min/mg enzyme for the reductive amination of L-2-amino-6-oxopimelate (at 30 degrees Celsius and pH 10.5)</Vmax>
    </kinetics>
    <temperatureDependence>
        <text evidence="2">Optimum temperature is 37 degrees Celsius.</text>
    </temperatureDependence>
</comment>
<comment type="pathway">
    <text>Amino-acid biosynthesis; L-lysine biosynthesis via DAP pathway; DL-2,6-diaminopimelate from (S)-tetrahydrodipicolinate: step 1/1.</text>
</comment>
<comment type="subunit">
    <text evidence="2">Homodimer.</text>
</comment>
<comment type="induction">
    <text evidence="2">Is expressed at a very high level and is reciprocally regulated with dapL and dapF.</text>
</comment>
<comment type="similarity">
    <text evidence="3">Belongs to the diaminopimelate dehydrogenase family.</text>
</comment>
<feature type="chain" id="PRO_0000417122" description="Meso-diaminopimelate D-dehydrogenase">
    <location>
        <begin position="1"/>
        <end position="299"/>
    </location>
</feature>
<feature type="binding site" evidence="1">
    <location>
        <begin position="11"/>
        <end position="14"/>
    </location>
    <ligand>
        <name>NADP(+)</name>
        <dbReference type="ChEBI" id="CHEBI:58349"/>
    </ligand>
</feature>
<feature type="binding site" evidence="1">
    <location>
        <position position="36"/>
    </location>
    <ligand>
        <name>NADP(+)</name>
        <dbReference type="ChEBI" id="CHEBI:58349"/>
    </ligand>
</feature>
<feature type="binding site" evidence="1">
    <location>
        <begin position="67"/>
        <end position="70"/>
    </location>
    <ligand>
        <name>NADP(+)</name>
        <dbReference type="ChEBI" id="CHEBI:58349"/>
    </ligand>
</feature>
<feature type="binding site" evidence="1">
    <location>
        <begin position="90"/>
        <end position="92"/>
    </location>
    <ligand>
        <name>NADP(+)</name>
        <dbReference type="ChEBI" id="CHEBI:58349"/>
    </ligand>
</feature>
<feature type="binding site" evidence="1">
    <location>
        <position position="92"/>
    </location>
    <ligand>
        <name>substrate</name>
    </ligand>
</feature>
<feature type="binding site" evidence="1">
    <location>
        <begin position="119"/>
        <end position="123"/>
    </location>
    <ligand>
        <name>NADP(+)</name>
        <dbReference type="ChEBI" id="CHEBI:58349"/>
    </ligand>
</feature>
<feature type="binding site" evidence="1">
    <location>
        <position position="122"/>
    </location>
    <ligand>
        <name>substrate</name>
    </ligand>
</feature>
<feature type="binding site" evidence="1">
    <location>
        <position position="146"/>
    </location>
    <ligand>
        <name>substrate</name>
    </ligand>
</feature>
<feature type="binding site" evidence="1">
    <location>
        <begin position="152"/>
        <end position="153"/>
    </location>
    <ligand>
        <name>substrate</name>
    </ligand>
</feature>
<feature type="binding site" evidence="1">
    <location>
        <position position="171"/>
    </location>
    <ligand>
        <name>substrate</name>
    </ligand>
</feature>
<feature type="binding site" evidence="1">
    <location>
        <position position="181"/>
    </location>
    <ligand>
        <name>substrate</name>
    </ligand>
</feature>
<feature type="binding site" evidence="1">
    <location>
        <position position="227"/>
    </location>
    <ligand>
        <name>substrate</name>
    </ligand>
</feature>
<feature type="binding site" evidence="1">
    <location>
        <position position="253"/>
    </location>
    <ligand>
        <name>substrate</name>
    </ligand>
</feature>
<dbReference type="EC" id="1.4.1.16"/>
<dbReference type="EMBL" id="CR626927">
    <property type="protein sequence ID" value="CAH09171.1"/>
    <property type="molecule type" value="Genomic_DNA"/>
</dbReference>
<dbReference type="RefSeq" id="WP_005790557.1">
    <property type="nucleotide sequence ID" value="NZ_UFTH01000001.1"/>
</dbReference>
<dbReference type="SMR" id="Q5L9Q6"/>
<dbReference type="PaxDb" id="272559-BF9343_3390"/>
<dbReference type="GeneID" id="60367804"/>
<dbReference type="KEGG" id="bfs:BF9343_3390"/>
<dbReference type="eggNOG" id="COG0673">
    <property type="taxonomic scope" value="Bacteria"/>
</dbReference>
<dbReference type="HOGENOM" id="CLU_055796_1_0_10"/>
<dbReference type="BioCyc" id="BFRA272559:G1GHZ-3704-MONOMER"/>
<dbReference type="UniPathway" id="UPA00034">
    <property type="reaction ID" value="UER00026"/>
</dbReference>
<dbReference type="Proteomes" id="UP000006731">
    <property type="component" value="Chromosome"/>
</dbReference>
<dbReference type="GO" id="GO:0047850">
    <property type="term" value="F:diaminopimelate dehydrogenase activity"/>
    <property type="evidence" value="ECO:0007669"/>
    <property type="project" value="UniProtKB-EC"/>
</dbReference>
<dbReference type="GO" id="GO:0000166">
    <property type="term" value="F:nucleotide binding"/>
    <property type="evidence" value="ECO:0007669"/>
    <property type="project" value="InterPro"/>
</dbReference>
<dbReference type="GO" id="GO:0019877">
    <property type="term" value="P:diaminopimelate biosynthetic process"/>
    <property type="evidence" value="ECO:0007669"/>
    <property type="project" value="UniProtKB-KW"/>
</dbReference>
<dbReference type="GO" id="GO:0009089">
    <property type="term" value="P:lysine biosynthetic process via diaminopimelate"/>
    <property type="evidence" value="ECO:0007669"/>
    <property type="project" value="UniProtKB-UniPathway"/>
</dbReference>
<dbReference type="CDD" id="cd02270">
    <property type="entry name" value="meso-DAPDH_N"/>
    <property type="match status" value="1"/>
</dbReference>
<dbReference type="Gene3D" id="3.30.360.10">
    <property type="entry name" value="Dihydrodipicolinate Reductase, domain 2"/>
    <property type="match status" value="1"/>
</dbReference>
<dbReference type="Gene3D" id="3.40.50.720">
    <property type="entry name" value="NAD(P)-binding Rossmann-like Domain"/>
    <property type="match status" value="1"/>
</dbReference>
<dbReference type="InterPro" id="IPR010190">
    <property type="entry name" value="Diaminopimelate_DH_Ddh"/>
</dbReference>
<dbReference type="InterPro" id="IPR000683">
    <property type="entry name" value="Gfo/Idh/MocA-like_OxRdtase_N"/>
</dbReference>
<dbReference type="InterPro" id="IPR032094">
    <property type="entry name" value="Meso-DAP_DH_C"/>
</dbReference>
<dbReference type="InterPro" id="IPR036291">
    <property type="entry name" value="NAD(P)-bd_dom_sf"/>
</dbReference>
<dbReference type="NCBIfam" id="TIGR01921">
    <property type="entry name" value="DAP-DH"/>
    <property type="match status" value="1"/>
</dbReference>
<dbReference type="PANTHER" id="PTHR31873:SF6">
    <property type="entry name" value="ASPARTATE DEHYDROGENASE DOMAIN-CONTAINING PROTEIN"/>
    <property type="match status" value="1"/>
</dbReference>
<dbReference type="PANTHER" id="PTHR31873">
    <property type="entry name" value="L-ASPARTATE DEHYDROGENASE-RELATED"/>
    <property type="match status" value="1"/>
</dbReference>
<dbReference type="Pfam" id="PF16654">
    <property type="entry name" value="DAPDH_C"/>
    <property type="match status" value="1"/>
</dbReference>
<dbReference type="Pfam" id="PF01408">
    <property type="entry name" value="GFO_IDH_MocA"/>
    <property type="match status" value="1"/>
</dbReference>
<dbReference type="PIRSF" id="PIRSF025648">
    <property type="entry name" value="DDH"/>
    <property type="match status" value="1"/>
</dbReference>
<dbReference type="SUPFAM" id="SSF55347">
    <property type="entry name" value="Glyceraldehyde-3-phosphate dehydrogenase-like, C-terminal domain"/>
    <property type="match status" value="1"/>
</dbReference>
<dbReference type="SUPFAM" id="SSF51735">
    <property type="entry name" value="NAD(P)-binding Rossmann-fold domains"/>
    <property type="match status" value="1"/>
</dbReference>
<gene>
    <name type="primary">ddh</name>
    <name type="ordered locus">BF3481</name>
    <name type="ORF">BF9343_3390</name>
</gene>
<protein>
    <recommendedName>
        <fullName>Meso-diaminopimelate D-dehydrogenase</fullName>
        <shortName>DAPDH</shortName>
        <shortName>Meso-DAP dehydrogenase</shortName>
        <ecNumber>1.4.1.16</ecNumber>
    </recommendedName>
</protein>
<evidence type="ECO:0000250" key="1"/>
<evidence type="ECO:0000269" key="2">
    <source>
    </source>
</evidence>
<evidence type="ECO:0000305" key="3"/>
<accession>Q5L9Q6</accession>
<proteinExistence type="evidence at protein level"/>
<reference key="1">
    <citation type="journal article" date="2005" name="Science">
        <title>Extensive DNA inversions in the B. fragilis genome control variable gene expression.</title>
        <authorList>
            <person name="Cerdeno-Tarraga A.-M."/>
            <person name="Patrick S."/>
            <person name="Crossman L.C."/>
            <person name="Blakely G."/>
            <person name="Abratt V."/>
            <person name="Lennard N."/>
            <person name="Poxton I."/>
            <person name="Duerden B."/>
            <person name="Harris B."/>
            <person name="Quail M.A."/>
            <person name="Barron A."/>
            <person name="Clark L."/>
            <person name="Corton C."/>
            <person name="Doggett J."/>
            <person name="Holden M.T.G."/>
            <person name="Larke N."/>
            <person name="Line A."/>
            <person name="Lord A."/>
            <person name="Norbertczak H."/>
            <person name="Ormond D."/>
            <person name="Price C."/>
            <person name="Rabbinowitsch E."/>
            <person name="Woodward J."/>
            <person name="Barrell B.G."/>
            <person name="Parkhill J."/>
        </authorList>
    </citation>
    <scope>NUCLEOTIDE SEQUENCE [LARGE SCALE GENOMIC DNA]</scope>
    <source>
        <strain>ATCC 25285 / DSM 2151 / CCUG 4856 / JCM 11019 / LMG 10263 / NCTC 9343 / Onslow / VPI 2553 / EN-2</strain>
    </source>
</reference>
<reference key="2">
    <citation type="journal article" date="2011" name="Biochim. Biophys. Acta">
        <title>Dual diaminopimelate biosynthesis pathways in Bacteroides fragilis and Clostridium thermocellum.</title>
        <authorList>
            <person name="Hudson A.O."/>
            <person name="Klartag A."/>
            <person name="Gilvarg C."/>
            <person name="Dobson R.C."/>
            <person name="Marques F.G."/>
            <person name="Leustek T."/>
        </authorList>
    </citation>
    <scope>FUNCTION</scope>
    <scope>CATALYTIC ACTIVITY</scope>
    <scope>SUBSTRATE SPECIFICITY</scope>
    <scope>BIOPHYSICOCHEMICAL PROPERTIES</scope>
    <scope>INDUCTION</scope>
    <scope>SUBUNIT</scope>
    <source>
        <strain>ATCC 25285 / DSM 2151 / CCUG 4856 / JCM 11019 / LMG 10263 / NCTC 9343 / Onslow / VPI 2553 / EN-2</strain>
    </source>
</reference>
<sequence length="299" mass="32327">MKKVRAAIVGYGNIGRYVLEALQAAPDFEIAGVVRRAGAENKPAELNDYAVVKDIKELQGVDVAILCTPTRSVEKYAKEILAMGINTVDSFDIHTGIVDLRRELGACAKEHGAVSIISAGWDPGSDSIVRTMLEAIAPKGITYTNFGPGMSMGHTVAVKAIDGVKAALSMTIPTGTGIHRRMVYIELKDGYKFEEVAAAIKSDAYFVNDETHVKQVPSVDALLDMGHGVNLTRKGVSGKTQNQLFEFNMRINNPALTAQVLVCVARASMKQQPGCYTMVEVPVIDLLPGDREEWIGHLV</sequence>
<organism>
    <name type="scientific">Bacteroides fragilis (strain ATCC 25285 / DSM 2151 / CCUG 4856 / JCM 11019 / LMG 10263 / NCTC 9343 / Onslow / VPI 2553 / EN-2)</name>
    <dbReference type="NCBI Taxonomy" id="272559"/>
    <lineage>
        <taxon>Bacteria</taxon>
        <taxon>Pseudomonadati</taxon>
        <taxon>Bacteroidota</taxon>
        <taxon>Bacteroidia</taxon>
        <taxon>Bacteroidales</taxon>
        <taxon>Bacteroidaceae</taxon>
        <taxon>Bacteroides</taxon>
    </lineage>
</organism>
<name>DAPDH_BACFN</name>